<name>DEOB_STAS1</name>
<dbReference type="EC" id="5.4.2.7" evidence="1"/>
<dbReference type="EMBL" id="AP008934">
    <property type="protein sequence ID" value="BAE17894.1"/>
    <property type="molecule type" value="Genomic_DNA"/>
</dbReference>
<dbReference type="RefSeq" id="WP_011302655.1">
    <property type="nucleotide sequence ID" value="NC_007350.1"/>
</dbReference>
<dbReference type="SMR" id="Q49Z82"/>
<dbReference type="GeneID" id="3615814"/>
<dbReference type="KEGG" id="ssp:SSP0749"/>
<dbReference type="PATRIC" id="fig|342451.11.peg.751"/>
<dbReference type="eggNOG" id="COG1015">
    <property type="taxonomic scope" value="Bacteria"/>
</dbReference>
<dbReference type="HOGENOM" id="CLU_053861_0_0_9"/>
<dbReference type="OrthoDB" id="9769930at2"/>
<dbReference type="UniPathway" id="UPA00002">
    <property type="reaction ID" value="UER00467"/>
</dbReference>
<dbReference type="Proteomes" id="UP000006371">
    <property type="component" value="Chromosome"/>
</dbReference>
<dbReference type="GO" id="GO:0005829">
    <property type="term" value="C:cytosol"/>
    <property type="evidence" value="ECO:0007669"/>
    <property type="project" value="TreeGrafter"/>
</dbReference>
<dbReference type="GO" id="GO:0000287">
    <property type="term" value="F:magnesium ion binding"/>
    <property type="evidence" value="ECO:0007669"/>
    <property type="project" value="InterPro"/>
</dbReference>
<dbReference type="GO" id="GO:0030145">
    <property type="term" value="F:manganese ion binding"/>
    <property type="evidence" value="ECO:0007669"/>
    <property type="project" value="UniProtKB-UniRule"/>
</dbReference>
<dbReference type="GO" id="GO:0008973">
    <property type="term" value="F:phosphopentomutase activity"/>
    <property type="evidence" value="ECO:0007669"/>
    <property type="project" value="UniProtKB-UniRule"/>
</dbReference>
<dbReference type="GO" id="GO:0006018">
    <property type="term" value="P:2-deoxyribose 1-phosphate catabolic process"/>
    <property type="evidence" value="ECO:0007669"/>
    <property type="project" value="UniProtKB-UniRule"/>
</dbReference>
<dbReference type="GO" id="GO:0006015">
    <property type="term" value="P:5-phosphoribose 1-diphosphate biosynthetic process"/>
    <property type="evidence" value="ECO:0007669"/>
    <property type="project" value="UniProtKB-UniPathway"/>
</dbReference>
<dbReference type="GO" id="GO:0043094">
    <property type="term" value="P:metabolic compound salvage"/>
    <property type="evidence" value="ECO:0007669"/>
    <property type="project" value="InterPro"/>
</dbReference>
<dbReference type="GO" id="GO:0009117">
    <property type="term" value="P:nucleotide metabolic process"/>
    <property type="evidence" value="ECO:0007669"/>
    <property type="project" value="InterPro"/>
</dbReference>
<dbReference type="CDD" id="cd16009">
    <property type="entry name" value="PPM"/>
    <property type="match status" value="1"/>
</dbReference>
<dbReference type="FunFam" id="3.30.70.1250:FF:000001">
    <property type="entry name" value="Phosphopentomutase"/>
    <property type="match status" value="1"/>
</dbReference>
<dbReference type="Gene3D" id="3.40.720.10">
    <property type="entry name" value="Alkaline Phosphatase, subunit A"/>
    <property type="match status" value="1"/>
</dbReference>
<dbReference type="Gene3D" id="3.30.70.1250">
    <property type="entry name" value="Phosphopentomutase"/>
    <property type="match status" value="1"/>
</dbReference>
<dbReference type="HAMAP" id="MF_00740">
    <property type="entry name" value="Phosphopentomut"/>
    <property type="match status" value="1"/>
</dbReference>
<dbReference type="InterPro" id="IPR017850">
    <property type="entry name" value="Alkaline_phosphatase_core_sf"/>
</dbReference>
<dbReference type="InterPro" id="IPR010045">
    <property type="entry name" value="DeoB"/>
</dbReference>
<dbReference type="InterPro" id="IPR006124">
    <property type="entry name" value="Metalloenzyme"/>
</dbReference>
<dbReference type="InterPro" id="IPR024052">
    <property type="entry name" value="Phosphopentomutase_DeoB_cap_sf"/>
</dbReference>
<dbReference type="NCBIfam" id="TIGR01696">
    <property type="entry name" value="deoB"/>
    <property type="match status" value="1"/>
</dbReference>
<dbReference type="NCBIfam" id="NF003766">
    <property type="entry name" value="PRK05362.1"/>
    <property type="match status" value="1"/>
</dbReference>
<dbReference type="PANTHER" id="PTHR21110">
    <property type="entry name" value="PHOSPHOPENTOMUTASE"/>
    <property type="match status" value="1"/>
</dbReference>
<dbReference type="PANTHER" id="PTHR21110:SF0">
    <property type="entry name" value="PHOSPHOPENTOMUTASE"/>
    <property type="match status" value="1"/>
</dbReference>
<dbReference type="Pfam" id="PF01676">
    <property type="entry name" value="Metalloenzyme"/>
    <property type="match status" value="1"/>
</dbReference>
<dbReference type="PIRSF" id="PIRSF001491">
    <property type="entry name" value="Ppentomutase"/>
    <property type="match status" value="1"/>
</dbReference>
<dbReference type="SUPFAM" id="SSF53649">
    <property type="entry name" value="Alkaline phosphatase-like"/>
    <property type="match status" value="1"/>
</dbReference>
<dbReference type="SUPFAM" id="SSF143856">
    <property type="entry name" value="DeoB insert domain-like"/>
    <property type="match status" value="1"/>
</dbReference>
<evidence type="ECO:0000255" key="1">
    <source>
        <dbReference type="HAMAP-Rule" id="MF_00740"/>
    </source>
</evidence>
<protein>
    <recommendedName>
        <fullName evidence="1">Phosphopentomutase</fullName>
        <ecNumber evidence="1">5.4.2.7</ecNumber>
    </recommendedName>
    <alternativeName>
        <fullName evidence="1">Phosphodeoxyribomutase</fullName>
    </alternativeName>
</protein>
<accession>Q49Z82</accession>
<organism>
    <name type="scientific">Staphylococcus saprophyticus subsp. saprophyticus (strain ATCC 15305 / DSM 20229 / NCIMB 8711 / NCTC 7292 / S-41)</name>
    <dbReference type="NCBI Taxonomy" id="342451"/>
    <lineage>
        <taxon>Bacteria</taxon>
        <taxon>Bacillati</taxon>
        <taxon>Bacillota</taxon>
        <taxon>Bacilli</taxon>
        <taxon>Bacillales</taxon>
        <taxon>Staphylococcaceae</taxon>
        <taxon>Staphylococcus</taxon>
    </lineage>
</organism>
<comment type="function">
    <text evidence="1">Isomerase that catalyzes the conversion of deoxy-ribose 1-phosphate (dRib-1-P) and ribose 1-phosphate (Rib-1-P) to deoxy-ribose 5-phosphate (dRib-5-P) and ribose 5-phosphate (Rib-5-P), respectively.</text>
</comment>
<comment type="catalytic activity">
    <reaction evidence="1">
        <text>2-deoxy-alpha-D-ribose 1-phosphate = 2-deoxy-D-ribose 5-phosphate</text>
        <dbReference type="Rhea" id="RHEA:27658"/>
        <dbReference type="ChEBI" id="CHEBI:57259"/>
        <dbReference type="ChEBI" id="CHEBI:62877"/>
        <dbReference type="EC" id="5.4.2.7"/>
    </reaction>
</comment>
<comment type="catalytic activity">
    <reaction evidence="1">
        <text>alpha-D-ribose 1-phosphate = D-ribose 5-phosphate</text>
        <dbReference type="Rhea" id="RHEA:18793"/>
        <dbReference type="ChEBI" id="CHEBI:57720"/>
        <dbReference type="ChEBI" id="CHEBI:78346"/>
        <dbReference type="EC" id="5.4.2.7"/>
    </reaction>
</comment>
<comment type="cofactor">
    <cofactor evidence="1">
        <name>Mn(2+)</name>
        <dbReference type="ChEBI" id="CHEBI:29035"/>
    </cofactor>
    <text evidence="1">Binds 2 manganese ions.</text>
</comment>
<comment type="pathway">
    <text evidence="1">Carbohydrate degradation; 2-deoxy-D-ribose 1-phosphate degradation; D-glyceraldehyde 3-phosphate and acetaldehyde from 2-deoxy-alpha-D-ribose 1-phosphate: step 1/2.</text>
</comment>
<comment type="subcellular location">
    <subcellularLocation>
        <location evidence="1">Cytoplasm</location>
    </subcellularLocation>
</comment>
<comment type="similarity">
    <text evidence="1">Belongs to the phosphopentomutase family.</text>
</comment>
<feature type="chain" id="PRO_0000199848" description="Phosphopentomutase">
    <location>
        <begin position="1"/>
        <end position="395"/>
    </location>
</feature>
<feature type="binding site" evidence="1">
    <location>
        <position position="14"/>
    </location>
    <ligand>
        <name>Mn(2+)</name>
        <dbReference type="ChEBI" id="CHEBI:29035"/>
        <label>1</label>
    </ligand>
</feature>
<feature type="binding site" evidence="1">
    <location>
        <position position="286"/>
    </location>
    <ligand>
        <name>Mn(2+)</name>
        <dbReference type="ChEBI" id="CHEBI:29035"/>
        <label>2</label>
    </ligand>
</feature>
<feature type="binding site" evidence="1">
    <location>
        <position position="291"/>
    </location>
    <ligand>
        <name>Mn(2+)</name>
        <dbReference type="ChEBI" id="CHEBI:29035"/>
        <label>2</label>
    </ligand>
</feature>
<feature type="binding site" evidence="1">
    <location>
        <position position="327"/>
    </location>
    <ligand>
        <name>Mn(2+)</name>
        <dbReference type="ChEBI" id="CHEBI:29035"/>
        <label>1</label>
    </ligand>
</feature>
<feature type="binding site" evidence="1">
    <location>
        <position position="328"/>
    </location>
    <ligand>
        <name>Mn(2+)</name>
        <dbReference type="ChEBI" id="CHEBI:29035"/>
        <label>1</label>
    </ligand>
</feature>
<feature type="binding site" evidence="1">
    <location>
        <position position="339"/>
    </location>
    <ligand>
        <name>Mn(2+)</name>
        <dbReference type="ChEBI" id="CHEBI:29035"/>
        <label>2</label>
    </ligand>
</feature>
<sequence length="395" mass="44373">MTTPFKRVHLIVMDSVGIGEGPDAKAFDDEGSHTLKHTLEGFEQSLPNLQKLGLGNIEPLPVIDKEVEPQAFYTKMSEASVGKDTMTGHWEIMGLNIMQPFKVYPEGFPEELVNEIETLTGRKVVANRPASGTQIIDEWGEHQMKTGDLIVYTSADPVLQIAAHEDIIPLEELYDICEKVRELTKDPKYLIGRIIARPYIGEPGSFKRTSNRHDYALKPFGRTVMNELKDNGYDVIALGKINDIFDGEGVTESIRTKDNMDGIDKLIETVQRDFNGLSFLNLVDFDALYGHRRDKPGYAQAIKDFDERLSELMNHLQEEDLVIITADHGNDPTADGTDHTREYIPVLMFSPKMTDYHELTIDSTFSSLGATIADNFGVKLPEFGKSYLKEMGVEK</sequence>
<reference key="1">
    <citation type="journal article" date="2005" name="Proc. Natl. Acad. Sci. U.S.A.">
        <title>Whole genome sequence of Staphylococcus saprophyticus reveals the pathogenesis of uncomplicated urinary tract infection.</title>
        <authorList>
            <person name="Kuroda M."/>
            <person name="Yamashita A."/>
            <person name="Hirakawa H."/>
            <person name="Kumano M."/>
            <person name="Morikawa K."/>
            <person name="Higashide M."/>
            <person name="Maruyama A."/>
            <person name="Inose Y."/>
            <person name="Matoba K."/>
            <person name="Toh H."/>
            <person name="Kuhara S."/>
            <person name="Hattori M."/>
            <person name="Ohta T."/>
        </authorList>
    </citation>
    <scope>NUCLEOTIDE SEQUENCE [LARGE SCALE GENOMIC DNA]</scope>
    <source>
        <strain>ATCC 15305 / DSM 20229 / NCIMB 8711 / NCTC 7292 / S-41</strain>
    </source>
</reference>
<keyword id="KW-0963">Cytoplasm</keyword>
<keyword id="KW-0413">Isomerase</keyword>
<keyword id="KW-0464">Manganese</keyword>
<keyword id="KW-0479">Metal-binding</keyword>
<keyword id="KW-1185">Reference proteome</keyword>
<gene>
    <name evidence="1" type="primary">deoB</name>
    <name type="synonym">drm</name>
    <name type="ordered locus">SSP0749</name>
</gene>
<proteinExistence type="inferred from homology"/>